<comment type="catalytic activity">
    <reaction evidence="1">
        <text>L-aspartate + NH4(+) + ATP = L-asparagine + AMP + diphosphate + H(+)</text>
        <dbReference type="Rhea" id="RHEA:11372"/>
        <dbReference type="ChEBI" id="CHEBI:15378"/>
        <dbReference type="ChEBI" id="CHEBI:28938"/>
        <dbReference type="ChEBI" id="CHEBI:29991"/>
        <dbReference type="ChEBI" id="CHEBI:30616"/>
        <dbReference type="ChEBI" id="CHEBI:33019"/>
        <dbReference type="ChEBI" id="CHEBI:58048"/>
        <dbReference type="ChEBI" id="CHEBI:456215"/>
        <dbReference type="EC" id="6.3.1.1"/>
    </reaction>
</comment>
<comment type="pathway">
    <text evidence="1">Amino-acid biosynthesis; L-asparagine biosynthesis; L-asparagine from L-aspartate (ammonia route): step 1/1.</text>
</comment>
<comment type="subcellular location">
    <subcellularLocation>
        <location evidence="1">Cytoplasm</location>
    </subcellularLocation>
</comment>
<comment type="similarity">
    <text evidence="1">Belongs to the class-II aminoacyl-tRNA synthetase family. AsnA subfamily.</text>
</comment>
<keyword id="KW-0028">Amino-acid biosynthesis</keyword>
<keyword id="KW-0061">Asparagine biosynthesis</keyword>
<keyword id="KW-0067">ATP-binding</keyword>
<keyword id="KW-0963">Cytoplasm</keyword>
<keyword id="KW-0436">Ligase</keyword>
<keyword id="KW-0547">Nucleotide-binding</keyword>
<keyword id="KW-1185">Reference proteome</keyword>
<accession>B7MGG4</accession>
<dbReference type="EC" id="6.3.1.1" evidence="1"/>
<dbReference type="EMBL" id="CU928161">
    <property type="protein sequence ID" value="CAR05372.1"/>
    <property type="molecule type" value="Genomic_DNA"/>
</dbReference>
<dbReference type="RefSeq" id="WP_000845129.1">
    <property type="nucleotide sequence ID" value="NC_011742.1"/>
</dbReference>
<dbReference type="SMR" id="B7MGG4"/>
<dbReference type="KEGG" id="ecz:ECS88_4166"/>
<dbReference type="HOGENOM" id="CLU_071543_0_0_6"/>
<dbReference type="UniPathway" id="UPA00134">
    <property type="reaction ID" value="UER00194"/>
</dbReference>
<dbReference type="Proteomes" id="UP000000747">
    <property type="component" value="Chromosome"/>
</dbReference>
<dbReference type="GO" id="GO:0005829">
    <property type="term" value="C:cytosol"/>
    <property type="evidence" value="ECO:0007669"/>
    <property type="project" value="TreeGrafter"/>
</dbReference>
<dbReference type="GO" id="GO:0004071">
    <property type="term" value="F:aspartate-ammonia ligase activity"/>
    <property type="evidence" value="ECO:0007669"/>
    <property type="project" value="UniProtKB-UniRule"/>
</dbReference>
<dbReference type="GO" id="GO:0005524">
    <property type="term" value="F:ATP binding"/>
    <property type="evidence" value="ECO:0007669"/>
    <property type="project" value="UniProtKB-UniRule"/>
</dbReference>
<dbReference type="GO" id="GO:0070981">
    <property type="term" value="P:L-asparagine biosynthetic process"/>
    <property type="evidence" value="ECO:0007669"/>
    <property type="project" value="UniProtKB-UniRule"/>
</dbReference>
<dbReference type="CDD" id="cd00645">
    <property type="entry name" value="AsnA"/>
    <property type="match status" value="1"/>
</dbReference>
<dbReference type="FunFam" id="3.30.930.10:FF:000025">
    <property type="entry name" value="Aspartate--ammonia ligase"/>
    <property type="match status" value="1"/>
</dbReference>
<dbReference type="Gene3D" id="3.30.930.10">
    <property type="entry name" value="Bira Bifunctional Protein, Domain 2"/>
    <property type="match status" value="1"/>
</dbReference>
<dbReference type="HAMAP" id="MF_00555">
    <property type="entry name" value="AsnA"/>
    <property type="match status" value="1"/>
</dbReference>
<dbReference type="InterPro" id="IPR006195">
    <property type="entry name" value="aa-tRNA-synth_II"/>
</dbReference>
<dbReference type="InterPro" id="IPR045864">
    <property type="entry name" value="aa-tRNA-synth_II/BPL/LPL"/>
</dbReference>
<dbReference type="InterPro" id="IPR004618">
    <property type="entry name" value="AsnA"/>
</dbReference>
<dbReference type="NCBIfam" id="TIGR00669">
    <property type="entry name" value="asnA"/>
    <property type="match status" value="1"/>
</dbReference>
<dbReference type="PANTHER" id="PTHR30073">
    <property type="entry name" value="ASPARTATE--AMMONIA LIGASE"/>
    <property type="match status" value="1"/>
</dbReference>
<dbReference type="PANTHER" id="PTHR30073:SF5">
    <property type="entry name" value="ASPARTATE--AMMONIA LIGASE"/>
    <property type="match status" value="1"/>
</dbReference>
<dbReference type="Pfam" id="PF03590">
    <property type="entry name" value="AsnA"/>
    <property type="match status" value="1"/>
</dbReference>
<dbReference type="PIRSF" id="PIRSF001555">
    <property type="entry name" value="Asp_ammon_ligase"/>
    <property type="match status" value="1"/>
</dbReference>
<dbReference type="SUPFAM" id="SSF55681">
    <property type="entry name" value="Class II aaRS and biotin synthetases"/>
    <property type="match status" value="1"/>
</dbReference>
<dbReference type="PROSITE" id="PS50862">
    <property type="entry name" value="AA_TRNA_LIGASE_II"/>
    <property type="match status" value="1"/>
</dbReference>
<organism>
    <name type="scientific">Escherichia coli O45:K1 (strain S88 / ExPEC)</name>
    <dbReference type="NCBI Taxonomy" id="585035"/>
    <lineage>
        <taxon>Bacteria</taxon>
        <taxon>Pseudomonadati</taxon>
        <taxon>Pseudomonadota</taxon>
        <taxon>Gammaproteobacteria</taxon>
        <taxon>Enterobacterales</taxon>
        <taxon>Enterobacteriaceae</taxon>
        <taxon>Escherichia</taxon>
    </lineage>
</organism>
<name>ASNA_ECO45</name>
<proteinExistence type="inferred from homology"/>
<evidence type="ECO:0000255" key="1">
    <source>
        <dbReference type="HAMAP-Rule" id="MF_00555"/>
    </source>
</evidence>
<feature type="chain" id="PRO_1000129111" description="Aspartate--ammonia ligase">
    <location>
        <begin position="1"/>
        <end position="330"/>
    </location>
</feature>
<protein>
    <recommendedName>
        <fullName evidence="1">Aspartate--ammonia ligase</fullName>
        <ecNumber evidence="1">6.3.1.1</ecNumber>
    </recommendedName>
    <alternativeName>
        <fullName evidence="1">Asparagine synthetase A</fullName>
    </alternativeName>
</protein>
<reference key="1">
    <citation type="journal article" date="2009" name="PLoS Genet.">
        <title>Organised genome dynamics in the Escherichia coli species results in highly diverse adaptive paths.</title>
        <authorList>
            <person name="Touchon M."/>
            <person name="Hoede C."/>
            <person name="Tenaillon O."/>
            <person name="Barbe V."/>
            <person name="Baeriswyl S."/>
            <person name="Bidet P."/>
            <person name="Bingen E."/>
            <person name="Bonacorsi S."/>
            <person name="Bouchier C."/>
            <person name="Bouvet O."/>
            <person name="Calteau A."/>
            <person name="Chiapello H."/>
            <person name="Clermont O."/>
            <person name="Cruveiller S."/>
            <person name="Danchin A."/>
            <person name="Diard M."/>
            <person name="Dossat C."/>
            <person name="Karoui M.E."/>
            <person name="Frapy E."/>
            <person name="Garry L."/>
            <person name="Ghigo J.M."/>
            <person name="Gilles A.M."/>
            <person name="Johnson J."/>
            <person name="Le Bouguenec C."/>
            <person name="Lescat M."/>
            <person name="Mangenot S."/>
            <person name="Martinez-Jehanne V."/>
            <person name="Matic I."/>
            <person name="Nassif X."/>
            <person name="Oztas S."/>
            <person name="Petit M.A."/>
            <person name="Pichon C."/>
            <person name="Rouy Z."/>
            <person name="Ruf C.S."/>
            <person name="Schneider D."/>
            <person name="Tourret J."/>
            <person name="Vacherie B."/>
            <person name="Vallenet D."/>
            <person name="Medigue C."/>
            <person name="Rocha E.P.C."/>
            <person name="Denamur E."/>
        </authorList>
    </citation>
    <scope>NUCLEOTIDE SEQUENCE [LARGE SCALE GENOMIC DNA]</scope>
    <source>
        <strain>S88 / ExPEC</strain>
    </source>
</reference>
<sequence>MKTAYIAKQRQISFVKSHFSRQLEERLGLIEVQAPILSRVGDGTQDNLSGCEKAVQVKVKALPDAQFEVVHSLAKWKRQTLGQHDFSAGEGLYTHMKALRPDEDRLSPLHSVYVDQWDWERVMGDGERQFSTLKSTVEAIWEGIKATEAAVSEEFGLAPFLPDQIHFVHSQELLSRYPELDAKGRERAIAKDLGAVFLVGIGGKLSDGHRHDVRAPDYDDWSTPSELGHAGLNGDILVWNPVLEDAFELSSMGIRVDADTLKHQLALTGDEDRLELEWHQALLRGEMPQTIGGGIGQSRLTMLLLQLPHIGQVQCGVWPAAVRESVPSLL</sequence>
<gene>
    <name evidence="1" type="primary">asnA</name>
    <name type="ordered locus">ECS88_4166</name>
</gene>